<reference key="1">
    <citation type="submission" date="2006-12" db="EMBL/GenBank/DDBJ databases">
        <title>Complete sequence of chromosome 1 of Nocardioides sp. JS614.</title>
        <authorList>
            <person name="Copeland A."/>
            <person name="Lucas S."/>
            <person name="Lapidus A."/>
            <person name="Barry K."/>
            <person name="Detter J.C."/>
            <person name="Glavina del Rio T."/>
            <person name="Hammon N."/>
            <person name="Israni S."/>
            <person name="Dalin E."/>
            <person name="Tice H."/>
            <person name="Pitluck S."/>
            <person name="Thompson L.S."/>
            <person name="Brettin T."/>
            <person name="Bruce D."/>
            <person name="Han C."/>
            <person name="Tapia R."/>
            <person name="Schmutz J."/>
            <person name="Larimer F."/>
            <person name="Land M."/>
            <person name="Hauser L."/>
            <person name="Kyrpides N."/>
            <person name="Kim E."/>
            <person name="Mattes T."/>
            <person name="Gossett J."/>
            <person name="Richardson P."/>
        </authorList>
    </citation>
    <scope>NUCLEOTIDE SEQUENCE [LARGE SCALE GENOMIC DNA]</scope>
    <source>
        <strain>ATCC BAA-499 / JS614</strain>
    </source>
</reference>
<protein>
    <recommendedName>
        <fullName evidence="1">Uracil phosphoribosyltransferase</fullName>
        <ecNumber evidence="1">2.4.2.9</ecNumber>
    </recommendedName>
    <alternativeName>
        <fullName evidence="1">UMP pyrophosphorylase</fullName>
    </alternativeName>
    <alternativeName>
        <fullName evidence="1">UPRTase</fullName>
    </alternativeName>
</protein>
<proteinExistence type="inferred from homology"/>
<feature type="chain" id="PRO_1000053750" description="Uracil phosphoribosyltransferase">
    <location>
        <begin position="1"/>
        <end position="213"/>
    </location>
</feature>
<feature type="binding site" evidence="1">
    <location>
        <position position="78"/>
    </location>
    <ligand>
        <name>5-phospho-alpha-D-ribose 1-diphosphate</name>
        <dbReference type="ChEBI" id="CHEBI:58017"/>
    </ligand>
</feature>
<feature type="binding site" evidence="1">
    <location>
        <position position="103"/>
    </location>
    <ligand>
        <name>5-phospho-alpha-D-ribose 1-diphosphate</name>
        <dbReference type="ChEBI" id="CHEBI:58017"/>
    </ligand>
</feature>
<feature type="binding site" evidence="1">
    <location>
        <begin position="130"/>
        <end position="138"/>
    </location>
    <ligand>
        <name>5-phospho-alpha-D-ribose 1-diphosphate</name>
        <dbReference type="ChEBI" id="CHEBI:58017"/>
    </ligand>
</feature>
<feature type="binding site" evidence="1">
    <location>
        <position position="197"/>
    </location>
    <ligand>
        <name>uracil</name>
        <dbReference type="ChEBI" id="CHEBI:17568"/>
    </ligand>
</feature>
<feature type="binding site" evidence="1">
    <location>
        <begin position="202"/>
        <end position="204"/>
    </location>
    <ligand>
        <name>uracil</name>
        <dbReference type="ChEBI" id="CHEBI:17568"/>
    </ligand>
</feature>
<feature type="binding site" evidence="1">
    <location>
        <position position="203"/>
    </location>
    <ligand>
        <name>5-phospho-alpha-D-ribose 1-diphosphate</name>
        <dbReference type="ChEBI" id="CHEBI:58017"/>
    </ligand>
</feature>
<gene>
    <name evidence="1" type="primary">upp</name>
    <name type="ordered locus">Noca_0275</name>
</gene>
<organism>
    <name type="scientific">Nocardioides sp. (strain ATCC BAA-499 / JS614)</name>
    <dbReference type="NCBI Taxonomy" id="196162"/>
    <lineage>
        <taxon>Bacteria</taxon>
        <taxon>Bacillati</taxon>
        <taxon>Actinomycetota</taxon>
        <taxon>Actinomycetes</taxon>
        <taxon>Propionibacteriales</taxon>
        <taxon>Nocardioidaceae</taxon>
        <taxon>Nocardioides</taxon>
    </lineage>
</organism>
<dbReference type="EC" id="2.4.2.9" evidence="1"/>
<dbReference type="EMBL" id="CP000509">
    <property type="protein sequence ID" value="ABL79820.1"/>
    <property type="molecule type" value="Genomic_DNA"/>
</dbReference>
<dbReference type="RefSeq" id="WP_011753771.1">
    <property type="nucleotide sequence ID" value="NC_008699.1"/>
</dbReference>
<dbReference type="SMR" id="A1SDD5"/>
<dbReference type="STRING" id="196162.Noca_0275"/>
<dbReference type="KEGG" id="nca:Noca_0275"/>
<dbReference type="eggNOG" id="COG0035">
    <property type="taxonomic scope" value="Bacteria"/>
</dbReference>
<dbReference type="HOGENOM" id="CLU_067096_2_3_11"/>
<dbReference type="OrthoDB" id="9781675at2"/>
<dbReference type="UniPathway" id="UPA00574">
    <property type="reaction ID" value="UER00636"/>
</dbReference>
<dbReference type="Proteomes" id="UP000000640">
    <property type="component" value="Chromosome"/>
</dbReference>
<dbReference type="GO" id="GO:0005525">
    <property type="term" value="F:GTP binding"/>
    <property type="evidence" value="ECO:0007669"/>
    <property type="project" value="UniProtKB-KW"/>
</dbReference>
<dbReference type="GO" id="GO:0000287">
    <property type="term" value="F:magnesium ion binding"/>
    <property type="evidence" value="ECO:0007669"/>
    <property type="project" value="UniProtKB-UniRule"/>
</dbReference>
<dbReference type="GO" id="GO:0004845">
    <property type="term" value="F:uracil phosphoribosyltransferase activity"/>
    <property type="evidence" value="ECO:0007669"/>
    <property type="project" value="UniProtKB-UniRule"/>
</dbReference>
<dbReference type="GO" id="GO:0044206">
    <property type="term" value="P:UMP salvage"/>
    <property type="evidence" value="ECO:0007669"/>
    <property type="project" value="UniProtKB-UniRule"/>
</dbReference>
<dbReference type="GO" id="GO:0006223">
    <property type="term" value="P:uracil salvage"/>
    <property type="evidence" value="ECO:0007669"/>
    <property type="project" value="InterPro"/>
</dbReference>
<dbReference type="CDD" id="cd06223">
    <property type="entry name" value="PRTases_typeI"/>
    <property type="match status" value="1"/>
</dbReference>
<dbReference type="FunFam" id="3.40.50.2020:FF:000003">
    <property type="entry name" value="Uracil phosphoribosyltransferase"/>
    <property type="match status" value="1"/>
</dbReference>
<dbReference type="Gene3D" id="3.40.50.2020">
    <property type="match status" value="1"/>
</dbReference>
<dbReference type="HAMAP" id="MF_01218_B">
    <property type="entry name" value="Upp_B"/>
    <property type="match status" value="1"/>
</dbReference>
<dbReference type="InterPro" id="IPR000836">
    <property type="entry name" value="PRibTrfase_dom"/>
</dbReference>
<dbReference type="InterPro" id="IPR029057">
    <property type="entry name" value="PRTase-like"/>
</dbReference>
<dbReference type="InterPro" id="IPR034332">
    <property type="entry name" value="Upp_B"/>
</dbReference>
<dbReference type="InterPro" id="IPR050054">
    <property type="entry name" value="UPRTase/APRTase"/>
</dbReference>
<dbReference type="InterPro" id="IPR005765">
    <property type="entry name" value="Ura_phspho_trans"/>
</dbReference>
<dbReference type="NCBIfam" id="NF001097">
    <property type="entry name" value="PRK00129.1"/>
    <property type="match status" value="1"/>
</dbReference>
<dbReference type="NCBIfam" id="TIGR01091">
    <property type="entry name" value="upp"/>
    <property type="match status" value="1"/>
</dbReference>
<dbReference type="PANTHER" id="PTHR32315">
    <property type="entry name" value="ADENINE PHOSPHORIBOSYLTRANSFERASE"/>
    <property type="match status" value="1"/>
</dbReference>
<dbReference type="PANTHER" id="PTHR32315:SF4">
    <property type="entry name" value="URACIL PHOSPHORIBOSYLTRANSFERASE, CHLOROPLASTIC"/>
    <property type="match status" value="1"/>
</dbReference>
<dbReference type="Pfam" id="PF14681">
    <property type="entry name" value="UPRTase"/>
    <property type="match status" value="1"/>
</dbReference>
<dbReference type="SUPFAM" id="SSF53271">
    <property type="entry name" value="PRTase-like"/>
    <property type="match status" value="1"/>
</dbReference>
<accession>A1SDD5</accession>
<evidence type="ECO:0000255" key="1">
    <source>
        <dbReference type="HAMAP-Rule" id="MF_01218"/>
    </source>
</evidence>
<name>UPP_NOCSJ</name>
<comment type="function">
    <text evidence="1">Catalyzes the conversion of uracil and 5-phospho-alpha-D-ribose 1-diphosphate (PRPP) to UMP and diphosphate.</text>
</comment>
<comment type="catalytic activity">
    <reaction evidence="1">
        <text>UMP + diphosphate = 5-phospho-alpha-D-ribose 1-diphosphate + uracil</text>
        <dbReference type="Rhea" id="RHEA:13017"/>
        <dbReference type="ChEBI" id="CHEBI:17568"/>
        <dbReference type="ChEBI" id="CHEBI:33019"/>
        <dbReference type="ChEBI" id="CHEBI:57865"/>
        <dbReference type="ChEBI" id="CHEBI:58017"/>
        <dbReference type="EC" id="2.4.2.9"/>
    </reaction>
</comment>
<comment type="cofactor">
    <cofactor evidence="1">
        <name>Mg(2+)</name>
        <dbReference type="ChEBI" id="CHEBI:18420"/>
    </cofactor>
    <text evidence="1">Binds 1 Mg(2+) ion per subunit. The magnesium is bound as Mg-PRPP.</text>
</comment>
<comment type="activity regulation">
    <text evidence="1">Allosterically activated by GTP.</text>
</comment>
<comment type="pathway">
    <text evidence="1">Pyrimidine metabolism; UMP biosynthesis via salvage pathway; UMP from uracil: step 1/1.</text>
</comment>
<comment type="similarity">
    <text evidence="1">Belongs to the UPRTase family.</text>
</comment>
<sequence>MRTHVVDHPLVAHKLTHLRNEETDSPTFRRLADELVTLLAYEATRDVRVEPIDVVTPVSPTTGVQLAKPRPLVVPILRAGLGMLDGMMRLLPTAEVGFLGMIRNEETLQASTYAERLPEDLSGRQCYVLDPMLATGGTLAAAIRFLTDRGADHITAICLLAAPEGCARLEQELDGLDVPVTIVTAAMDERLNEKGYIVPGLGDAGDRLYGIVG</sequence>
<keyword id="KW-0021">Allosteric enzyme</keyword>
<keyword id="KW-0328">Glycosyltransferase</keyword>
<keyword id="KW-0342">GTP-binding</keyword>
<keyword id="KW-0460">Magnesium</keyword>
<keyword id="KW-0547">Nucleotide-binding</keyword>
<keyword id="KW-1185">Reference proteome</keyword>
<keyword id="KW-0808">Transferase</keyword>